<organism>
    <name type="scientific">Aspergillus thermomutatus</name>
    <name type="common">Neosartorya pseudofischeri</name>
    <dbReference type="NCBI Taxonomy" id="41047"/>
    <lineage>
        <taxon>Eukaryota</taxon>
        <taxon>Fungi</taxon>
        <taxon>Dikarya</taxon>
        <taxon>Ascomycota</taxon>
        <taxon>Pezizomycotina</taxon>
        <taxon>Eurotiomycetes</taxon>
        <taxon>Eurotiomycetidae</taxon>
        <taxon>Eurotiales</taxon>
        <taxon>Aspergillaceae</taxon>
        <taxon>Aspergillus</taxon>
        <taxon>Aspergillus subgen. Fumigati</taxon>
    </lineage>
</organism>
<dbReference type="EC" id="2.1.1.-" evidence="2"/>
<dbReference type="EMBL" id="NKHU02000029">
    <property type="protein sequence ID" value="RHZ63465.1"/>
    <property type="molecule type" value="Genomic_DNA"/>
</dbReference>
<dbReference type="SMR" id="A0A397HK53"/>
<dbReference type="STRING" id="41047.A0A397HK53"/>
<dbReference type="VEuPathDB" id="FungiDB:CDV56_109050"/>
<dbReference type="OrthoDB" id="10251242at2759"/>
<dbReference type="Proteomes" id="UP000215305">
    <property type="component" value="Unassembled WGS sequence"/>
</dbReference>
<dbReference type="GO" id="GO:0008171">
    <property type="term" value="F:O-methyltransferase activity"/>
    <property type="evidence" value="ECO:0007669"/>
    <property type="project" value="InterPro"/>
</dbReference>
<dbReference type="GO" id="GO:0008757">
    <property type="term" value="F:S-adenosylmethionine-dependent methyltransferase activity"/>
    <property type="evidence" value="ECO:0007669"/>
    <property type="project" value="TreeGrafter"/>
</dbReference>
<dbReference type="GO" id="GO:0032259">
    <property type="term" value="P:methylation"/>
    <property type="evidence" value="ECO:0007669"/>
    <property type="project" value="UniProtKB-KW"/>
</dbReference>
<dbReference type="CDD" id="cd02440">
    <property type="entry name" value="AdoMet_MTases"/>
    <property type="match status" value="1"/>
</dbReference>
<dbReference type="Gene3D" id="3.40.50.150">
    <property type="entry name" value="Vaccinia Virus protein VP39"/>
    <property type="match status" value="1"/>
</dbReference>
<dbReference type="InterPro" id="IPR050362">
    <property type="entry name" value="Cation-dep_OMT"/>
</dbReference>
<dbReference type="InterPro" id="IPR029063">
    <property type="entry name" value="SAM-dependent_MTases_sf"/>
</dbReference>
<dbReference type="InterPro" id="IPR002935">
    <property type="entry name" value="SAM_O-MeTrfase"/>
</dbReference>
<dbReference type="PANTHER" id="PTHR10509:SF14">
    <property type="entry name" value="CAFFEOYL-COA O-METHYLTRANSFERASE 3-RELATED"/>
    <property type="match status" value="1"/>
</dbReference>
<dbReference type="PANTHER" id="PTHR10509">
    <property type="entry name" value="O-METHYLTRANSFERASE-RELATED"/>
    <property type="match status" value="1"/>
</dbReference>
<dbReference type="Pfam" id="PF01596">
    <property type="entry name" value="Methyltransf_3"/>
    <property type="match status" value="1"/>
</dbReference>
<dbReference type="SUPFAM" id="SSF53335">
    <property type="entry name" value="S-adenosyl-L-methionine-dependent methyltransferases"/>
    <property type="match status" value="1"/>
</dbReference>
<dbReference type="PROSITE" id="PS51682">
    <property type="entry name" value="SAM_OMT_I"/>
    <property type="match status" value="1"/>
</dbReference>
<gene>
    <name evidence="3" type="primary">ankF</name>
    <name type="ORF">CDV56_109050</name>
</gene>
<keyword id="KW-0489">Methyltransferase</keyword>
<keyword id="KW-1185">Reference proteome</keyword>
<keyword id="KW-0949">S-adenosyl-L-methionine</keyword>
<keyword id="KW-0808">Transferase</keyword>
<comment type="function">
    <text evidence="2">O-methyltransferase; part of the ank cluster that mediates the biosynthesis of NK13650 C, a highly modified cyclo-arginine-tyrosine dipeptide (PubMed:36702957). AnkF converts NK13650 B to produce NK13650 D via methylation of the C-17 phenol group (PubMed:36702957). Within the pathway, the cyclodipeptide synthase ankA acts as the scaffold-generating enzyme and is responsible for formation of the cyclo-Arg-Tyr diketopiperazine (cRY) from L-Arg and L-Tyr. The ankA product cRY is desaturated by the cytochrome P450 monooxygenase ankB to yield a dehydro-cyclodipeptide intermediate. The FAD-dependent monooxygenase ankC then installs the m-OH, ankD catalyzes the attachment of L-homoserine, and ankE ligates citrate to the ankD product to yield NK13650 B. The O-methyltransferase ankF is responsible for methylation of the C-17 phenol group of NK13650 B to produce NK13650 D. Amidation of NK13650 D with L-Asp by ankG then leads to the production of NK13650 C, whereas amidation of NK13650 B produces NK13650 A (PubMed:36702957).</text>
</comment>
<comment type="catalytic activity">
    <reaction evidence="2">
        <text>NK13650 B + S-adenosyl-L-methionine = NK13650 D + S-adenosyl-L-homocysteine + H(+)</text>
        <dbReference type="Rhea" id="RHEA:80259"/>
        <dbReference type="ChEBI" id="CHEBI:15378"/>
        <dbReference type="ChEBI" id="CHEBI:57856"/>
        <dbReference type="ChEBI" id="CHEBI:59789"/>
        <dbReference type="ChEBI" id="CHEBI:231317"/>
        <dbReference type="ChEBI" id="CHEBI:231318"/>
    </reaction>
    <physiologicalReaction direction="left-to-right" evidence="2">
        <dbReference type="Rhea" id="RHEA:80260"/>
    </physiologicalReaction>
</comment>
<comment type="pathway">
    <text evidence="2">Secondary metabolite biosynthesis.</text>
</comment>
<comment type="similarity">
    <text evidence="1">Belongs to the class I-like SAM-binding methyltransferase superfamily. Cation-dependent O-methyltransferase family.</text>
</comment>
<feature type="chain" id="PRO_0000460658" description="O-methyltransferase ankF">
    <location>
        <begin position="1"/>
        <end position="239"/>
    </location>
</feature>
<feature type="binding site" evidence="1">
    <location>
        <position position="71"/>
    </location>
    <ligand>
        <name>S-adenosyl-L-methionine</name>
        <dbReference type="ChEBI" id="CHEBI:59789"/>
    </ligand>
</feature>
<feature type="binding site" evidence="1">
    <location>
        <begin position="73"/>
        <end position="74"/>
    </location>
    <ligand>
        <name>S-adenosyl-L-methionine</name>
        <dbReference type="ChEBI" id="CHEBI:59789"/>
    </ligand>
</feature>
<feature type="binding site" evidence="1">
    <location>
        <position position="79"/>
    </location>
    <ligand>
        <name>S-adenosyl-L-methionine</name>
        <dbReference type="ChEBI" id="CHEBI:59789"/>
    </ligand>
</feature>
<feature type="binding site" evidence="1">
    <location>
        <position position="98"/>
    </location>
    <ligand>
        <name>S-adenosyl-L-methionine</name>
        <dbReference type="ChEBI" id="CHEBI:59789"/>
    </ligand>
</feature>
<feature type="binding site" evidence="1">
    <location>
        <position position="127"/>
    </location>
    <ligand>
        <name>S-adenosyl-L-methionine</name>
        <dbReference type="ChEBI" id="CHEBI:59789"/>
    </ligand>
</feature>
<proteinExistence type="evidence at protein level"/>
<accession>A0A397HK53</accession>
<protein>
    <recommendedName>
        <fullName evidence="3">O-methyltransferase ankF</fullName>
        <ecNumber evidence="2">2.1.1.-</ecNumber>
    </recommendedName>
    <alternativeName>
        <fullName evidence="3">Ank biosynthesis cluster protein F</fullName>
    </alternativeName>
</protein>
<name>ANKF_ASPTH</name>
<reference key="1">
    <citation type="journal article" date="2019" name="Microbiol. Resour. Announc.">
        <title>Draft Genome Sequence of Azole-Resistant Aspergillus thermomutatus (Neosartorya pseudofischeri) Strain HMR-AF-39, Isolated from a Human Nasal Septum Abscess Aspirate.</title>
        <authorList>
            <person name="Parent-Michaud M."/>
            <person name="Dufresne P.J."/>
            <person name="Fournier E."/>
            <person name="Martineau C."/>
            <person name="Moreira S."/>
            <person name="Perkins V."/>
            <person name="de Repentigny L."/>
            <person name="Dufresne S.F."/>
        </authorList>
    </citation>
    <scope>NUCLEOTIDE SEQUENCE [LARGE SCALE GENOMIC DNA]</scope>
    <source>
        <strain>HMR-AF-39/LSPQ-01276</strain>
    </source>
</reference>
<reference key="2">
    <citation type="journal article" date="2023" name="Nat. Chem. Biol.">
        <title>Genome mining for unknown-unknown natural products.</title>
        <authorList>
            <person name="Yee D.A."/>
            <person name="Niwa K."/>
            <person name="Perlatti B."/>
            <person name="Chen M."/>
            <person name="Li Y."/>
            <person name="Tang Y."/>
        </authorList>
    </citation>
    <scope>FUNCTION</scope>
    <scope>CATALYTIC ACTIVITY</scope>
    <scope>PATHWAY</scope>
</reference>
<sequence>MYESIIPFPDETASTVDKYCCSHSTSLPPLFADHAAWTVDKFQTSYMMCCPLQAQMCVFLASDRRARRVLEIGTFTGYSALAWKEGMKAVGGEVWTCEAGPRAIAASKEAFAKYDPEGKIHLVEGPALQTLREINAGPFDIIYVDARKAEYIEYVEIILERHLLAENGIILADDTIHLGLVADRSSTNPHSAREDIEYSLQHADNVYKFNEWAVKHPQLDVLLLPIFNGVTLIKIKSQT</sequence>
<evidence type="ECO:0000255" key="1">
    <source>
        <dbReference type="PROSITE-ProRule" id="PRU01019"/>
    </source>
</evidence>
<evidence type="ECO:0000269" key="2">
    <source>
    </source>
</evidence>
<evidence type="ECO:0000303" key="3">
    <source>
    </source>
</evidence>